<reference key="1">
    <citation type="submission" date="2008-10" db="EMBL/GenBank/DDBJ databases">
        <title>Genome sequence of Ureaplasma urealyticum serovar 10 ATCC-33699.</title>
        <authorList>
            <person name="Shrivastava S."/>
            <person name="Methe B.A."/>
            <person name="Glass J."/>
            <person name="White K."/>
            <person name="Duffy L.B."/>
        </authorList>
    </citation>
    <scope>NUCLEOTIDE SEQUENCE [LARGE SCALE GENOMIC DNA]</scope>
    <source>
        <strain>ATCC 33699 / Western</strain>
    </source>
</reference>
<dbReference type="EC" id="6.1.1.11" evidence="1"/>
<dbReference type="EMBL" id="CP001184">
    <property type="protein sequence ID" value="ACI60117.1"/>
    <property type="molecule type" value="Genomic_DNA"/>
</dbReference>
<dbReference type="RefSeq" id="WP_004026098.1">
    <property type="nucleotide sequence ID" value="NC_011374.1"/>
</dbReference>
<dbReference type="SMR" id="B5ZAT6"/>
<dbReference type="STRING" id="565575.UUR10_0114"/>
<dbReference type="GeneID" id="93848599"/>
<dbReference type="KEGG" id="uue:UUR10_0114"/>
<dbReference type="eggNOG" id="COG0172">
    <property type="taxonomic scope" value="Bacteria"/>
</dbReference>
<dbReference type="HOGENOM" id="CLU_023797_1_1_14"/>
<dbReference type="OrthoDB" id="9804647at2"/>
<dbReference type="UniPathway" id="UPA00906">
    <property type="reaction ID" value="UER00895"/>
</dbReference>
<dbReference type="Proteomes" id="UP000002018">
    <property type="component" value="Chromosome"/>
</dbReference>
<dbReference type="GO" id="GO:0005737">
    <property type="term" value="C:cytoplasm"/>
    <property type="evidence" value="ECO:0007669"/>
    <property type="project" value="UniProtKB-SubCell"/>
</dbReference>
<dbReference type="GO" id="GO:0005524">
    <property type="term" value="F:ATP binding"/>
    <property type="evidence" value="ECO:0007669"/>
    <property type="project" value="UniProtKB-UniRule"/>
</dbReference>
<dbReference type="GO" id="GO:0004828">
    <property type="term" value="F:serine-tRNA ligase activity"/>
    <property type="evidence" value="ECO:0007669"/>
    <property type="project" value="UniProtKB-UniRule"/>
</dbReference>
<dbReference type="GO" id="GO:0016260">
    <property type="term" value="P:selenocysteine biosynthetic process"/>
    <property type="evidence" value="ECO:0007669"/>
    <property type="project" value="UniProtKB-UniRule"/>
</dbReference>
<dbReference type="GO" id="GO:0006434">
    <property type="term" value="P:seryl-tRNA aminoacylation"/>
    <property type="evidence" value="ECO:0007669"/>
    <property type="project" value="UniProtKB-UniRule"/>
</dbReference>
<dbReference type="CDD" id="cd00770">
    <property type="entry name" value="SerRS_core"/>
    <property type="match status" value="1"/>
</dbReference>
<dbReference type="Gene3D" id="3.30.930.10">
    <property type="entry name" value="Bira Bifunctional Protein, Domain 2"/>
    <property type="match status" value="1"/>
</dbReference>
<dbReference type="Gene3D" id="1.10.287.40">
    <property type="entry name" value="Serine-tRNA synthetase, tRNA binding domain"/>
    <property type="match status" value="1"/>
</dbReference>
<dbReference type="HAMAP" id="MF_00176">
    <property type="entry name" value="Ser_tRNA_synth_type1"/>
    <property type="match status" value="1"/>
</dbReference>
<dbReference type="InterPro" id="IPR002314">
    <property type="entry name" value="aa-tRNA-synt_IIb"/>
</dbReference>
<dbReference type="InterPro" id="IPR006195">
    <property type="entry name" value="aa-tRNA-synth_II"/>
</dbReference>
<dbReference type="InterPro" id="IPR045864">
    <property type="entry name" value="aa-tRNA-synth_II/BPL/LPL"/>
</dbReference>
<dbReference type="InterPro" id="IPR002317">
    <property type="entry name" value="Ser-tRNA-ligase_type_1"/>
</dbReference>
<dbReference type="InterPro" id="IPR015866">
    <property type="entry name" value="Ser-tRNA-synth_1_N"/>
</dbReference>
<dbReference type="InterPro" id="IPR042103">
    <property type="entry name" value="SerRS_1_N_sf"/>
</dbReference>
<dbReference type="InterPro" id="IPR033729">
    <property type="entry name" value="SerRS_core"/>
</dbReference>
<dbReference type="InterPro" id="IPR010978">
    <property type="entry name" value="tRNA-bd_arm"/>
</dbReference>
<dbReference type="NCBIfam" id="TIGR00414">
    <property type="entry name" value="serS"/>
    <property type="match status" value="1"/>
</dbReference>
<dbReference type="PANTHER" id="PTHR43697:SF1">
    <property type="entry name" value="SERINE--TRNA LIGASE"/>
    <property type="match status" value="1"/>
</dbReference>
<dbReference type="PANTHER" id="PTHR43697">
    <property type="entry name" value="SERYL-TRNA SYNTHETASE"/>
    <property type="match status" value="1"/>
</dbReference>
<dbReference type="Pfam" id="PF02403">
    <property type="entry name" value="Seryl_tRNA_N"/>
    <property type="match status" value="1"/>
</dbReference>
<dbReference type="Pfam" id="PF00587">
    <property type="entry name" value="tRNA-synt_2b"/>
    <property type="match status" value="1"/>
</dbReference>
<dbReference type="PIRSF" id="PIRSF001529">
    <property type="entry name" value="Ser-tRNA-synth_IIa"/>
    <property type="match status" value="1"/>
</dbReference>
<dbReference type="PRINTS" id="PR00981">
    <property type="entry name" value="TRNASYNTHSER"/>
</dbReference>
<dbReference type="SUPFAM" id="SSF55681">
    <property type="entry name" value="Class II aaRS and biotin synthetases"/>
    <property type="match status" value="1"/>
</dbReference>
<dbReference type="SUPFAM" id="SSF46589">
    <property type="entry name" value="tRNA-binding arm"/>
    <property type="match status" value="1"/>
</dbReference>
<dbReference type="PROSITE" id="PS50862">
    <property type="entry name" value="AA_TRNA_LIGASE_II"/>
    <property type="match status" value="1"/>
</dbReference>
<protein>
    <recommendedName>
        <fullName evidence="1">Serine--tRNA ligase</fullName>
        <ecNumber evidence="1">6.1.1.11</ecNumber>
    </recommendedName>
    <alternativeName>
        <fullName evidence="1">Seryl-tRNA synthetase</fullName>
        <shortName evidence="1">SerRS</shortName>
    </alternativeName>
    <alternativeName>
        <fullName evidence="1">Seryl-tRNA(Ser/Sec) synthetase</fullName>
    </alternativeName>
</protein>
<name>SYS_UREU1</name>
<evidence type="ECO:0000255" key="1">
    <source>
        <dbReference type="HAMAP-Rule" id="MF_00176"/>
    </source>
</evidence>
<sequence>MFDINLIRKDIVVTKEKMLNKKVSSDLFDQIFGLDVLVRNLMQQEQNLNAKKNQLSKEIGILAKNKDPKLQQTLDLVNSIKSELQDISLTLSNKQDELNKLLLVIPNMPDDSVPIGNDENDNVEIKKVFEPRKFDFSPLAHWDLAAKNKLIDFDKSTKITGSRFIIYTNFGARLYRALQQFCLDMNVKAGFNEIWAPVIVNQESLIGSGNLPKFVDDLFKLENSNYYLSPTAEVQLTNLHRNEILKASDLPLYYTALTPCFRSEAGSAGRDVRGVIRQHQFHKVELVKLCKPEDSFKELESMTRQAESILEALELPYRRIALCTGDLGFSSAKTYDLEVWLPSYNAYKEISSCSNCTNFQARRAKIRYKETVDAPTELVHTLNGSSLAIDRLWAAVVENYQQEDGSITIPKALEKYIY</sequence>
<gene>
    <name evidence="1" type="primary">serS</name>
    <name type="ordered locus">UUR10_0114</name>
</gene>
<keyword id="KW-0030">Aminoacyl-tRNA synthetase</keyword>
<keyword id="KW-0067">ATP-binding</keyword>
<keyword id="KW-0963">Cytoplasm</keyword>
<keyword id="KW-0436">Ligase</keyword>
<keyword id="KW-0547">Nucleotide-binding</keyword>
<keyword id="KW-0648">Protein biosynthesis</keyword>
<organism>
    <name type="scientific">Ureaplasma urealyticum serovar 10 (strain ATCC 33699 / Western)</name>
    <dbReference type="NCBI Taxonomy" id="565575"/>
    <lineage>
        <taxon>Bacteria</taxon>
        <taxon>Bacillati</taxon>
        <taxon>Mycoplasmatota</taxon>
        <taxon>Mycoplasmoidales</taxon>
        <taxon>Mycoplasmoidaceae</taxon>
        <taxon>Ureaplasma</taxon>
    </lineage>
</organism>
<feature type="chain" id="PRO_1000098143" description="Serine--tRNA ligase">
    <location>
        <begin position="1"/>
        <end position="418"/>
    </location>
</feature>
<feature type="binding site" evidence="1">
    <location>
        <begin position="231"/>
        <end position="233"/>
    </location>
    <ligand>
        <name>L-serine</name>
        <dbReference type="ChEBI" id="CHEBI:33384"/>
    </ligand>
</feature>
<feature type="binding site" evidence="1">
    <location>
        <begin position="262"/>
        <end position="264"/>
    </location>
    <ligand>
        <name>ATP</name>
        <dbReference type="ChEBI" id="CHEBI:30616"/>
    </ligand>
</feature>
<feature type="binding site" evidence="1">
    <location>
        <position position="285"/>
    </location>
    <ligand>
        <name>L-serine</name>
        <dbReference type="ChEBI" id="CHEBI:33384"/>
    </ligand>
</feature>
<feature type="binding site" evidence="1">
    <location>
        <begin position="349"/>
        <end position="352"/>
    </location>
    <ligand>
        <name>ATP</name>
        <dbReference type="ChEBI" id="CHEBI:30616"/>
    </ligand>
</feature>
<feature type="binding site" evidence="1">
    <location>
        <position position="385"/>
    </location>
    <ligand>
        <name>L-serine</name>
        <dbReference type="ChEBI" id="CHEBI:33384"/>
    </ligand>
</feature>
<accession>B5ZAT6</accession>
<proteinExistence type="inferred from homology"/>
<comment type="function">
    <text evidence="1">Catalyzes the attachment of serine to tRNA(Ser). Is also able to aminoacylate tRNA(Sec) with serine, to form the misacylated tRNA L-seryl-tRNA(Sec), which will be further converted into selenocysteinyl-tRNA(Sec).</text>
</comment>
<comment type="catalytic activity">
    <reaction evidence="1">
        <text>tRNA(Ser) + L-serine + ATP = L-seryl-tRNA(Ser) + AMP + diphosphate + H(+)</text>
        <dbReference type="Rhea" id="RHEA:12292"/>
        <dbReference type="Rhea" id="RHEA-COMP:9669"/>
        <dbReference type="Rhea" id="RHEA-COMP:9703"/>
        <dbReference type="ChEBI" id="CHEBI:15378"/>
        <dbReference type="ChEBI" id="CHEBI:30616"/>
        <dbReference type="ChEBI" id="CHEBI:33019"/>
        <dbReference type="ChEBI" id="CHEBI:33384"/>
        <dbReference type="ChEBI" id="CHEBI:78442"/>
        <dbReference type="ChEBI" id="CHEBI:78533"/>
        <dbReference type="ChEBI" id="CHEBI:456215"/>
        <dbReference type="EC" id="6.1.1.11"/>
    </reaction>
</comment>
<comment type="catalytic activity">
    <reaction evidence="1">
        <text>tRNA(Sec) + L-serine + ATP = L-seryl-tRNA(Sec) + AMP + diphosphate + H(+)</text>
        <dbReference type="Rhea" id="RHEA:42580"/>
        <dbReference type="Rhea" id="RHEA-COMP:9742"/>
        <dbReference type="Rhea" id="RHEA-COMP:10128"/>
        <dbReference type="ChEBI" id="CHEBI:15378"/>
        <dbReference type="ChEBI" id="CHEBI:30616"/>
        <dbReference type="ChEBI" id="CHEBI:33019"/>
        <dbReference type="ChEBI" id="CHEBI:33384"/>
        <dbReference type="ChEBI" id="CHEBI:78442"/>
        <dbReference type="ChEBI" id="CHEBI:78533"/>
        <dbReference type="ChEBI" id="CHEBI:456215"/>
        <dbReference type="EC" id="6.1.1.11"/>
    </reaction>
</comment>
<comment type="pathway">
    <text evidence="1">Aminoacyl-tRNA biosynthesis; selenocysteinyl-tRNA(Sec) biosynthesis; L-seryl-tRNA(Sec) from L-serine and tRNA(Sec): step 1/1.</text>
</comment>
<comment type="subunit">
    <text evidence="1">Homodimer. The tRNA molecule binds across the dimer.</text>
</comment>
<comment type="subcellular location">
    <subcellularLocation>
        <location evidence="1">Cytoplasm</location>
    </subcellularLocation>
</comment>
<comment type="domain">
    <text evidence="1">Consists of two distinct domains, a catalytic core and a N-terminal extension that is involved in tRNA binding.</text>
</comment>
<comment type="similarity">
    <text evidence="1">Belongs to the class-II aminoacyl-tRNA synthetase family. Type-1 seryl-tRNA synthetase subfamily.</text>
</comment>